<comment type="function">
    <text evidence="1">Required for maturation of ribosomal RNAs and formation of the large ribosomal subunit.</text>
</comment>
<comment type="subcellular location">
    <subcellularLocation>
        <location evidence="1">Nucleus</location>
        <location evidence="1">Nucleolus</location>
    </subcellularLocation>
    <subcellularLocation>
        <location evidence="1">Nucleus</location>
        <location evidence="1">Nucleoplasm</location>
    </subcellularLocation>
</comment>
<comment type="similarity">
    <text evidence="1">Belongs to the WD repeat WDR12/YTM1 family.</text>
</comment>
<dbReference type="EMBL" id="CH477324">
    <property type="protein sequence ID" value="EAT43536.1"/>
    <property type="molecule type" value="Genomic_DNA"/>
</dbReference>
<dbReference type="SMR" id="Q17BB0"/>
<dbReference type="FunCoup" id="Q17BB0">
    <property type="interactions" value="1720"/>
</dbReference>
<dbReference type="STRING" id="7159.Q17BB0"/>
<dbReference type="PaxDb" id="7159-AAEL005041-PA"/>
<dbReference type="EnsemblMetazoa" id="AAEL005041-RA">
    <property type="protein sequence ID" value="AAEL005041-PA"/>
    <property type="gene ID" value="AAEL005041"/>
</dbReference>
<dbReference type="GeneID" id="5565845"/>
<dbReference type="KEGG" id="aag:5565845"/>
<dbReference type="VEuPathDB" id="VectorBase:AAEL005041"/>
<dbReference type="eggNOG" id="KOG0313">
    <property type="taxonomic scope" value="Eukaryota"/>
</dbReference>
<dbReference type="HOGENOM" id="CLU_000288_57_0_1"/>
<dbReference type="InParanoid" id="Q17BB0"/>
<dbReference type="OMA" id="DHKYVEF"/>
<dbReference type="OrthoDB" id="10251381at2759"/>
<dbReference type="PhylomeDB" id="Q17BB0"/>
<dbReference type="Proteomes" id="UP000008820">
    <property type="component" value="Chromosome 2"/>
</dbReference>
<dbReference type="Proteomes" id="UP000682892">
    <property type="component" value="Unassembled WGS sequence"/>
</dbReference>
<dbReference type="GO" id="GO:0005654">
    <property type="term" value="C:nucleoplasm"/>
    <property type="evidence" value="ECO:0007669"/>
    <property type="project" value="UniProtKB-SubCell"/>
</dbReference>
<dbReference type="GO" id="GO:0070545">
    <property type="term" value="C:PeBoW complex"/>
    <property type="evidence" value="ECO:0000250"/>
    <property type="project" value="UniProtKB"/>
</dbReference>
<dbReference type="GO" id="GO:0030687">
    <property type="term" value="C:preribosome, large subunit precursor"/>
    <property type="evidence" value="ECO:0007669"/>
    <property type="project" value="UniProtKB-UniRule"/>
</dbReference>
<dbReference type="GO" id="GO:0043021">
    <property type="term" value="F:ribonucleoprotein complex binding"/>
    <property type="evidence" value="ECO:0007669"/>
    <property type="project" value="UniProtKB-UniRule"/>
</dbReference>
<dbReference type="GO" id="GO:0000466">
    <property type="term" value="P:maturation of 5.8S rRNA from tricistronic rRNA transcript (SSU-rRNA, 5.8S rRNA, LSU-rRNA)"/>
    <property type="evidence" value="ECO:0007669"/>
    <property type="project" value="UniProtKB-UniRule"/>
</dbReference>
<dbReference type="GO" id="GO:0000463">
    <property type="term" value="P:maturation of LSU-rRNA from tricistronic rRNA transcript (SSU-rRNA, 5.8S rRNA, LSU-rRNA)"/>
    <property type="evidence" value="ECO:0000250"/>
    <property type="project" value="UniProtKB"/>
</dbReference>
<dbReference type="CDD" id="cd00200">
    <property type="entry name" value="WD40"/>
    <property type="match status" value="1"/>
</dbReference>
<dbReference type="FunFam" id="2.130.10.10:FF:001328">
    <property type="entry name" value="Ribosome biogenesis protein WDR12 homolog"/>
    <property type="match status" value="1"/>
</dbReference>
<dbReference type="Gene3D" id="2.130.10.10">
    <property type="entry name" value="YVTN repeat-like/Quinoprotein amine dehydrogenase"/>
    <property type="match status" value="1"/>
</dbReference>
<dbReference type="HAMAP" id="MF_03029">
    <property type="entry name" value="WDR12"/>
    <property type="match status" value="1"/>
</dbReference>
<dbReference type="InterPro" id="IPR020472">
    <property type="entry name" value="G-protein_beta_WD-40_rep"/>
</dbReference>
<dbReference type="InterPro" id="IPR012972">
    <property type="entry name" value="NLE"/>
</dbReference>
<dbReference type="InterPro" id="IPR015943">
    <property type="entry name" value="WD40/YVTN_repeat-like_dom_sf"/>
</dbReference>
<dbReference type="InterPro" id="IPR019775">
    <property type="entry name" value="WD40_repeat_CS"/>
</dbReference>
<dbReference type="InterPro" id="IPR036322">
    <property type="entry name" value="WD40_repeat_dom_sf"/>
</dbReference>
<dbReference type="InterPro" id="IPR001680">
    <property type="entry name" value="WD40_rpt"/>
</dbReference>
<dbReference type="InterPro" id="IPR028599">
    <property type="entry name" value="WDR12/Ytm1"/>
</dbReference>
<dbReference type="PANTHER" id="PTHR19855:SF11">
    <property type="entry name" value="RIBOSOME BIOGENESIS PROTEIN WDR12"/>
    <property type="match status" value="1"/>
</dbReference>
<dbReference type="PANTHER" id="PTHR19855">
    <property type="entry name" value="WD40 REPEAT PROTEIN 12, 37"/>
    <property type="match status" value="1"/>
</dbReference>
<dbReference type="Pfam" id="PF08154">
    <property type="entry name" value="NLE"/>
    <property type="match status" value="1"/>
</dbReference>
<dbReference type="Pfam" id="PF00400">
    <property type="entry name" value="WD40"/>
    <property type="match status" value="6"/>
</dbReference>
<dbReference type="PRINTS" id="PR00320">
    <property type="entry name" value="GPROTEINBRPT"/>
</dbReference>
<dbReference type="SMART" id="SM00320">
    <property type="entry name" value="WD40"/>
    <property type="match status" value="7"/>
</dbReference>
<dbReference type="SUPFAM" id="SSF50978">
    <property type="entry name" value="WD40 repeat-like"/>
    <property type="match status" value="1"/>
</dbReference>
<dbReference type="PROSITE" id="PS00678">
    <property type="entry name" value="WD_REPEATS_1"/>
    <property type="match status" value="1"/>
</dbReference>
<dbReference type="PROSITE" id="PS50082">
    <property type="entry name" value="WD_REPEATS_2"/>
    <property type="match status" value="3"/>
</dbReference>
<dbReference type="PROSITE" id="PS50294">
    <property type="entry name" value="WD_REPEATS_REGION"/>
    <property type="match status" value="1"/>
</dbReference>
<feature type="chain" id="PRO_0000369552" description="Ribosome biogenesis protein WDR12 homolog">
    <location>
        <begin position="1"/>
        <end position="427"/>
    </location>
</feature>
<feature type="repeat" description="WD 1">
    <location>
        <begin position="109"/>
        <end position="146"/>
    </location>
</feature>
<feature type="repeat" description="WD 2">
    <location>
        <begin position="148"/>
        <end position="190"/>
    </location>
</feature>
<feature type="repeat" description="WD 3">
    <location>
        <begin position="197"/>
        <end position="236"/>
    </location>
</feature>
<feature type="repeat" description="WD 4">
    <location>
        <begin position="260"/>
        <end position="298"/>
    </location>
</feature>
<feature type="repeat" description="WD 5">
    <location>
        <begin position="301"/>
        <end position="339"/>
    </location>
</feature>
<feature type="repeat" description="WD 6">
    <location>
        <begin position="345"/>
        <end position="385"/>
    </location>
</feature>
<feature type="repeat" description="WD 7">
    <location>
        <begin position="389"/>
        <end position="427"/>
    </location>
</feature>
<feature type="region of interest" description="Ubiquitin-like (UBL) domain" evidence="1">
    <location>
        <begin position="13"/>
        <end position="97"/>
    </location>
</feature>
<gene>
    <name type="ORF">AAEL005041</name>
</gene>
<reference key="1">
    <citation type="journal article" date="2007" name="Science">
        <title>Genome sequence of Aedes aegypti, a major arbovirus vector.</title>
        <authorList>
            <person name="Nene V."/>
            <person name="Wortman J.R."/>
            <person name="Lawson D."/>
            <person name="Haas B.J."/>
            <person name="Kodira C.D."/>
            <person name="Tu Z.J."/>
            <person name="Loftus B.J."/>
            <person name="Xi Z."/>
            <person name="Megy K."/>
            <person name="Grabherr M."/>
            <person name="Ren Q."/>
            <person name="Zdobnov E.M."/>
            <person name="Lobo N.F."/>
            <person name="Campbell K.S."/>
            <person name="Brown S.E."/>
            <person name="Bonaldo M.F."/>
            <person name="Zhu J."/>
            <person name="Sinkins S.P."/>
            <person name="Hogenkamp D.G."/>
            <person name="Amedeo P."/>
            <person name="Arensburger P."/>
            <person name="Atkinson P.W."/>
            <person name="Bidwell S.L."/>
            <person name="Biedler J."/>
            <person name="Birney E."/>
            <person name="Bruggner R.V."/>
            <person name="Costas J."/>
            <person name="Coy M.R."/>
            <person name="Crabtree J."/>
            <person name="Crawford M."/>
            <person name="DeBruyn B."/>
            <person name="DeCaprio D."/>
            <person name="Eiglmeier K."/>
            <person name="Eisenstadt E."/>
            <person name="El-Dorry H."/>
            <person name="Gelbart W.M."/>
            <person name="Gomes S.L."/>
            <person name="Hammond M."/>
            <person name="Hannick L.I."/>
            <person name="Hogan J.R."/>
            <person name="Holmes M.H."/>
            <person name="Jaffe D."/>
            <person name="Johnston S.J."/>
            <person name="Kennedy R.C."/>
            <person name="Koo H."/>
            <person name="Kravitz S."/>
            <person name="Kriventseva E.V."/>
            <person name="Kulp D."/>
            <person name="Labutti K."/>
            <person name="Lee E."/>
            <person name="Li S."/>
            <person name="Lovin D.D."/>
            <person name="Mao C."/>
            <person name="Mauceli E."/>
            <person name="Menck C.F."/>
            <person name="Miller J.R."/>
            <person name="Montgomery P."/>
            <person name="Mori A."/>
            <person name="Nascimento A.L."/>
            <person name="Naveira H.F."/>
            <person name="Nusbaum C."/>
            <person name="O'Leary S.B."/>
            <person name="Orvis J."/>
            <person name="Pertea M."/>
            <person name="Quesneville H."/>
            <person name="Reidenbach K.R."/>
            <person name="Rogers Y.-H.C."/>
            <person name="Roth C.W."/>
            <person name="Schneider J.R."/>
            <person name="Schatz M."/>
            <person name="Shumway M."/>
            <person name="Stanke M."/>
            <person name="Stinson E.O."/>
            <person name="Tubio J.M.C."/>
            <person name="Vanzee J.P."/>
            <person name="Verjovski-Almeida S."/>
            <person name="Werner D."/>
            <person name="White O.R."/>
            <person name="Wyder S."/>
            <person name="Zeng Q."/>
            <person name="Zhao Q."/>
            <person name="Zhao Y."/>
            <person name="Hill C.A."/>
            <person name="Raikhel A.S."/>
            <person name="Soares M.B."/>
            <person name="Knudson D.L."/>
            <person name="Lee N.H."/>
            <person name="Galagan J."/>
            <person name="Salzberg S.L."/>
            <person name="Paulsen I.T."/>
            <person name="Dimopoulos G."/>
            <person name="Collins F.H."/>
            <person name="Bruce B."/>
            <person name="Fraser-Liggett C.M."/>
            <person name="Severson D.W."/>
        </authorList>
    </citation>
    <scope>NUCLEOTIDE SEQUENCE [LARGE SCALE GENOMIC DNA]</scope>
    <source>
        <strain>LVPib12</strain>
    </source>
</reference>
<accession>Q17BB0</accession>
<protein>
    <recommendedName>
        <fullName evidence="1">Ribosome biogenesis protein WDR12 homolog</fullName>
    </recommendedName>
</protein>
<keyword id="KW-0539">Nucleus</keyword>
<keyword id="KW-1185">Reference proteome</keyword>
<keyword id="KW-0677">Repeat</keyword>
<keyword id="KW-0690">Ribosome biogenesis</keyword>
<keyword id="KW-0698">rRNA processing</keyword>
<keyword id="KW-0853">WD repeat</keyword>
<evidence type="ECO:0000255" key="1">
    <source>
        <dbReference type="HAMAP-Rule" id="MF_03029"/>
    </source>
</evidence>
<sequence>MALKITGKSEGQLQLHLYTKQKQFAVPDVPYSIRANVSNKELNVLINTLLKDSGNSEAGKVEFDFLLNGEFVKIPLGQHLKEREISFEDTVELEYVERYPAPEPQDCLLHDDWVSAVEAKDNWILTGCYDNTLNIWTTKGKHKLTIPGHIAPVKGVTWISLDEEKGVFASASQDQTVMLWEWNVKANSVECVQVCKGHERGVDCIAANRSKTRMATGSWDTMLKIWSTDVRNDGDSQPSTSKRQKLDTEKARTPVLTLAGHRECISGVQWIDDNTLVTSSWDHTIKIWDLALSGIKSEICGHKSFFDLSYSHLNGLIIAASPDKNLRLYDPKSNQGTIVKNTYLGHTQWVQSVRWSTTNEYLFVSGAYDNHVKLWDYRSPKAPIFELIGHEDKVLACDWSNPKFILSGGSDNSVRVFKSKIAIGEQK</sequence>
<name>WDR12_AEDAE</name>
<proteinExistence type="inferred from homology"/>
<organism>
    <name type="scientific">Aedes aegypti</name>
    <name type="common">Yellowfever mosquito</name>
    <name type="synonym">Culex aegypti</name>
    <dbReference type="NCBI Taxonomy" id="7159"/>
    <lineage>
        <taxon>Eukaryota</taxon>
        <taxon>Metazoa</taxon>
        <taxon>Ecdysozoa</taxon>
        <taxon>Arthropoda</taxon>
        <taxon>Hexapoda</taxon>
        <taxon>Insecta</taxon>
        <taxon>Pterygota</taxon>
        <taxon>Neoptera</taxon>
        <taxon>Endopterygota</taxon>
        <taxon>Diptera</taxon>
        <taxon>Nematocera</taxon>
        <taxon>Culicoidea</taxon>
        <taxon>Culicidae</taxon>
        <taxon>Culicinae</taxon>
        <taxon>Aedini</taxon>
        <taxon>Aedes</taxon>
        <taxon>Stegomyia</taxon>
    </lineage>
</organism>